<geneLocation type="mitochondrion"/>
<feature type="chain" id="PRO_0000247817" description="Cytochrome b">
    <location>
        <begin position="1"/>
        <end position="379"/>
    </location>
</feature>
<feature type="transmembrane region" description="Helical" evidence="1">
    <location>
        <begin position="34"/>
        <end position="54"/>
    </location>
</feature>
<feature type="transmembrane region" description="Helical" evidence="1">
    <location>
        <begin position="78"/>
        <end position="99"/>
    </location>
</feature>
<feature type="transmembrane region" description="Helical" evidence="1">
    <location>
        <begin position="114"/>
        <end position="134"/>
    </location>
</feature>
<feature type="transmembrane region" description="Helical" evidence="1">
    <location>
        <begin position="179"/>
        <end position="199"/>
    </location>
</feature>
<feature type="transmembrane region" description="Helical" evidence="1">
    <location>
        <begin position="227"/>
        <end position="247"/>
    </location>
</feature>
<feature type="transmembrane region" description="Helical" evidence="1">
    <location>
        <begin position="289"/>
        <end position="309"/>
    </location>
</feature>
<feature type="transmembrane region" description="Helical" evidence="1">
    <location>
        <begin position="321"/>
        <end position="341"/>
    </location>
</feature>
<feature type="transmembrane region" description="Helical" evidence="1">
    <location>
        <begin position="348"/>
        <end position="368"/>
    </location>
</feature>
<feature type="binding site" description="axial binding residue" evidence="1">
    <location>
        <position position="84"/>
    </location>
    <ligand>
        <name>heme b</name>
        <dbReference type="ChEBI" id="CHEBI:60344"/>
        <label>b562</label>
    </ligand>
    <ligandPart>
        <name>Fe</name>
        <dbReference type="ChEBI" id="CHEBI:18248"/>
    </ligandPart>
</feature>
<feature type="binding site" description="axial binding residue" evidence="1">
    <location>
        <position position="98"/>
    </location>
    <ligand>
        <name>heme b</name>
        <dbReference type="ChEBI" id="CHEBI:60344"/>
        <label>b566</label>
    </ligand>
    <ligandPart>
        <name>Fe</name>
        <dbReference type="ChEBI" id="CHEBI:18248"/>
    </ligandPart>
</feature>
<feature type="binding site" description="axial binding residue" evidence="1">
    <location>
        <position position="183"/>
    </location>
    <ligand>
        <name>heme b</name>
        <dbReference type="ChEBI" id="CHEBI:60344"/>
        <label>b562</label>
    </ligand>
    <ligandPart>
        <name>Fe</name>
        <dbReference type="ChEBI" id="CHEBI:18248"/>
    </ligandPart>
</feature>
<feature type="binding site" description="axial binding residue" evidence="1">
    <location>
        <position position="197"/>
    </location>
    <ligand>
        <name>heme b</name>
        <dbReference type="ChEBI" id="CHEBI:60344"/>
        <label>b566</label>
    </ligand>
    <ligandPart>
        <name>Fe</name>
        <dbReference type="ChEBI" id="CHEBI:18248"/>
    </ligandPart>
</feature>
<feature type="binding site" evidence="1">
    <location>
        <position position="202"/>
    </location>
    <ligand>
        <name>a ubiquinone</name>
        <dbReference type="ChEBI" id="CHEBI:16389"/>
    </ligand>
</feature>
<gene>
    <name type="primary">MT-CYB</name>
    <name type="synonym">COB</name>
    <name type="synonym">CYTB</name>
    <name type="synonym">MTCYB</name>
</gene>
<evidence type="ECO:0000250" key="1">
    <source>
        <dbReference type="UniProtKB" id="P00157"/>
    </source>
</evidence>
<evidence type="ECO:0000255" key="2">
    <source>
        <dbReference type="PROSITE-ProRule" id="PRU00967"/>
    </source>
</evidence>
<evidence type="ECO:0000255" key="3">
    <source>
        <dbReference type="PROSITE-ProRule" id="PRU00968"/>
    </source>
</evidence>
<comment type="function">
    <text evidence="1">Component of the ubiquinol-cytochrome c reductase complex (complex III or cytochrome b-c1 complex) that is part of the mitochondrial respiratory chain. The b-c1 complex mediates electron transfer from ubiquinol to cytochrome c. Contributes to the generation of a proton gradient across the mitochondrial membrane that is then used for ATP synthesis.</text>
</comment>
<comment type="cofactor">
    <cofactor evidence="1">
        <name>heme b</name>
        <dbReference type="ChEBI" id="CHEBI:60344"/>
    </cofactor>
    <text evidence="1">Binds 2 heme b groups non-covalently.</text>
</comment>
<comment type="subunit">
    <text evidence="1">The cytochrome bc1 complex contains 3 respiratory subunits (MT-CYB, CYC1 and UQCRFS1), 2 core proteins (UQCRC1 and UQCRC2) and probably 6 low-molecular weight proteins.</text>
</comment>
<comment type="subcellular location">
    <subcellularLocation>
        <location evidence="1">Mitochondrion inner membrane</location>
        <topology evidence="1">Multi-pass membrane protein</topology>
    </subcellularLocation>
</comment>
<comment type="similarity">
    <text evidence="2 3">Belongs to the cytochrome b family.</text>
</comment>
<comment type="caution">
    <text evidence="1">The full-length protein contains only eight transmembrane helices, not nine as predicted by bioinformatics tools.</text>
</comment>
<name>CYB_CARIN</name>
<organism>
    <name type="scientific">Carettochelys insculpta</name>
    <name type="common">Pitted-shelled turtle</name>
    <dbReference type="NCBI Taxonomy" id="44489"/>
    <lineage>
        <taxon>Eukaryota</taxon>
        <taxon>Metazoa</taxon>
        <taxon>Chordata</taxon>
        <taxon>Craniata</taxon>
        <taxon>Vertebrata</taxon>
        <taxon>Euteleostomi</taxon>
        <taxon>Archelosauria</taxon>
        <taxon>Testudinata</taxon>
        <taxon>Testudines</taxon>
        <taxon>Cryptodira</taxon>
        <taxon>Trionychia</taxon>
        <taxon>Carettochelyidae</taxon>
        <taxon>Carettochelys</taxon>
    </lineage>
</organism>
<sequence>MTTNLRKTHPLLKMINNSFIDLPTPSNISIWWNFGSLLGACLILQTITGLFLAMHYSSDISLAFSSVTHITRNVQYGWLIRNMHANGASLFFMCIYLHIGRGIYYGSYLYKETWNIGIMLLFTVMATAFMGYVLPWGQMSFWGATVITNLLSAMPYIGNTLVQWVWGGFSIDNATLTRFFTLHFLLPFSIMGLTIVHLMFLHETGSNNPTGLNSNIDKIPFHPYFSYKDALGLILMLTTLLTLTLFFPNLLGDPENFTPANPLSTPPHIKPEWYFLFAYAILRSIPNKLGGVLALLFSILILFLLPTLHTSKQRSMMFRPISQMLFWSLVADLLILTWIGAQPVEDPFIMIGQLASIMYFTILLILLPITSIIENKMLK</sequence>
<protein>
    <recommendedName>
        <fullName>Cytochrome b</fullName>
    </recommendedName>
    <alternativeName>
        <fullName>Complex III subunit 3</fullName>
    </alternativeName>
    <alternativeName>
        <fullName>Complex III subunit III</fullName>
    </alternativeName>
    <alternativeName>
        <fullName>Cytochrome b-c1 complex subunit 3</fullName>
    </alternativeName>
    <alternativeName>
        <fullName>Ubiquinol-cytochrome-c reductase complex cytochrome b subunit</fullName>
    </alternativeName>
</protein>
<dbReference type="EMBL" id="AY259546">
    <property type="protein sequence ID" value="AAP20656.1"/>
    <property type="molecule type" value="Genomic_DNA"/>
</dbReference>
<dbReference type="RefSeq" id="YP_003587330.1">
    <property type="nucleotide sequence ID" value="NC_014048.1"/>
</dbReference>
<dbReference type="SMR" id="Q6X2M0"/>
<dbReference type="GeneID" id="25099113"/>
<dbReference type="CTD" id="4519"/>
<dbReference type="GO" id="GO:0005743">
    <property type="term" value="C:mitochondrial inner membrane"/>
    <property type="evidence" value="ECO:0007669"/>
    <property type="project" value="UniProtKB-SubCell"/>
</dbReference>
<dbReference type="GO" id="GO:0045275">
    <property type="term" value="C:respiratory chain complex III"/>
    <property type="evidence" value="ECO:0007669"/>
    <property type="project" value="InterPro"/>
</dbReference>
<dbReference type="GO" id="GO:0046872">
    <property type="term" value="F:metal ion binding"/>
    <property type="evidence" value="ECO:0007669"/>
    <property type="project" value="UniProtKB-KW"/>
</dbReference>
<dbReference type="GO" id="GO:0008121">
    <property type="term" value="F:ubiquinol-cytochrome-c reductase activity"/>
    <property type="evidence" value="ECO:0007669"/>
    <property type="project" value="InterPro"/>
</dbReference>
<dbReference type="GO" id="GO:0006122">
    <property type="term" value="P:mitochondrial electron transport, ubiquinol to cytochrome c"/>
    <property type="evidence" value="ECO:0007669"/>
    <property type="project" value="TreeGrafter"/>
</dbReference>
<dbReference type="CDD" id="cd00290">
    <property type="entry name" value="cytochrome_b_C"/>
    <property type="match status" value="1"/>
</dbReference>
<dbReference type="CDD" id="cd00284">
    <property type="entry name" value="Cytochrome_b_N"/>
    <property type="match status" value="1"/>
</dbReference>
<dbReference type="FunFam" id="1.20.810.10:FF:000002">
    <property type="entry name" value="Cytochrome b"/>
    <property type="match status" value="1"/>
</dbReference>
<dbReference type="Gene3D" id="1.20.810.10">
    <property type="entry name" value="Cytochrome Bc1 Complex, Chain C"/>
    <property type="match status" value="1"/>
</dbReference>
<dbReference type="InterPro" id="IPR005798">
    <property type="entry name" value="Cyt_b/b6_C"/>
</dbReference>
<dbReference type="InterPro" id="IPR036150">
    <property type="entry name" value="Cyt_b/b6_C_sf"/>
</dbReference>
<dbReference type="InterPro" id="IPR005797">
    <property type="entry name" value="Cyt_b/b6_N"/>
</dbReference>
<dbReference type="InterPro" id="IPR027387">
    <property type="entry name" value="Cytb/b6-like_sf"/>
</dbReference>
<dbReference type="InterPro" id="IPR030689">
    <property type="entry name" value="Cytochrome_b"/>
</dbReference>
<dbReference type="InterPro" id="IPR048260">
    <property type="entry name" value="Cytochrome_b_C_euk/bac"/>
</dbReference>
<dbReference type="InterPro" id="IPR048259">
    <property type="entry name" value="Cytochrome_b_N_euk/bac"/>
</dbReference>
<dbReference type="InterPro" id="IPR016174">
    <property type="entry name" value="Di-haem_cyt_TM"/>
</dbReference>
<dbReference type="PANTHER" id="PTHR19271">
    <property type="entry name" value="CYTOCHROME B"/>
    <property type="match status" value="1"/>
</dbReference>
<dbReference type="PANTHER" id="PTHR19271:SF16">
    <property type="entry name" value="CYTOCHROME B"/>
    <property type="match status" value="1"/>
</dbReference>
<dbReference type="Pfam" id="PF00032">
    <property type="entry name" value="Cytochrom_B_C"/>
    <property type="match status" value="1"/>
</dbReference>
<dbReference type="Pfam" id="PF00033">
    <property type="entry name" value="Cytochrome_B"/>
    <property type="match status" value="1"/>
</dbReference>
<dbReference type="PIRSF" id="PIRSF038885">
    <property type="entry name" value="COB"/>
    <property type="match status" value="1"/>
</dbReference>
<dbReference type="SUPFAM" id="SSF81648">
    <property type="entry name" value="a domain/subunit of cytochrome bc1 complex (Ubiquinol-cytochrome c reductase)"/>
    <property type="match status" value="1"/>
</dbReference>
<dbReference type="SUPFAM" id="SSF81342">
    <property type="entry name" value="Transmembrane di-heme cytochromes"/>
    <property type="match status" value="1"/>
</dbReference>
<dbReference type="PROSITE" id="PS51003">
    <property type="entry name" value="CYTB_CTER"/>
    <property type="match status" value="1"/>
</dbReference>
<dbReference type="PROSITE" id="PS51002">
    <property type="entry name" value="CYTB_NTER"/>
    <property type="match status" value="1"/>
</dbReference>
<keyword id="KW-0249">Electron transport</keyword>
<keyword id="KW-0349">Heme</keyword>
<keyword id="KW-0408">Iron</keyword>
<keyword id="KW-0472">Membrane</keyword>
<keyword id="KW-0479">Metal-binding</keyword>
<keyword id="KW-0496">Mitochondrion</keyword>
<keyword id="KW-0999">Mitochondrion inner membrane</keyword>
<keyword id="KW-0679">Respiratory chain</keyword>
<keyword id="KW-0812">Transmembrane</keyword>
<keyword id="KW-1133">Transmembrane helix</keyword>
<keyword id="KW-0813">Transport</keyword>
<keyword id="KW-0830">Ubiquinone</keyword>
<proteinExistence type="inferred from homology"/>
<reference key="1">
    <citation type="journal article" date="2004" name="Syst. Biol.">
        <title>Multiple data sets, high homoplasy, and the phylogeny of softshell turtles (Testudines: Trionychidae).</title>
        <authorList>
            <person name="Engstrom T.N."/>
            <person name="Shaffer H.B."/>
            <person name="McCord W.P."/>
        </authorList>
    </citation>
    <scope>NUCLEOTIDE SEQUENCE [GENOMIC DNA]</scope>
</reference>
<accession>Q6X2M0</accession>